<evidence type="ECO:0000250" key="1">
    <source>
        <dbReference type="UniProtKB" id="P03901"/>
    </source>
</evidence>
<evidence type="ECO:0000250" key="2">
    <source>
        <dbReference type="UniProtKB" id="P03902"/>
    </source>
</evidence>
<evidence type="ECO:0000255" key="3"/>
<evidence type="ECO:0000305" key="4"/>
<evidence type="ECO:0000312" key="5">
    <source>
        <dbReference type="RGD" id="620494"/>
    </source>
</evidence>
<protein>
    <recommendedName>
        <fullName>NADH-ubiquinone oxidoreductase chain 4L</fullName>
        <ecNumber>7.1.1.2</ecNumber>
    </recommendedName>
    <alternativeName>
        <fullName>NADH dehydrogenase subunit 4L</fullName>
    </alternativeName>
</protein>
<name>NU4LM_RAT</name>
<reference key="1">
    <citation type="journal article" date="1981" name="Curr. Genet.">
        <title>Analysis of a DNA segment from rat liver mitochondria containing the genes for the cytochrome oxidase subunits I, II and III, ATPase subunit 6, and several tRNA genes.</title>
        <authorList>
            <person name="Grosskopf R."/>
            <person name="Feldmann H."/>
        </authorList>
    </citation>
    <scope>NUCLEOTIDE SEQUENCE [GENOMIC DNA]</scope>
    <source>
        <strain>Sprague-Dawley</strain>
    </source>
</reference>
<reference key="2">
    <citation type="journal article" date="1989" name="J. Mol. Evol.">
        <title>The complete nucleotide sequence of the Rattus norvegicus mitochondrial genome: cryptic signals revealed by comparative analysis between vertebrates.</title>
        <authorList>
            <person name="Gadaleta G."/>
            <person name="Pepe G."/>
            <person name="de Candia G."/>
            <person name="Quagliariello C."/>
            <person name="Sbisa E."/>
            <person name="Saccone C."/>
        </authorList>
    </citation>
    <scope>NUCLEOTIDE SEQUENCE [GENOMIC DNA]</scope>
    <source>
        <strain>Wistar</strain>
    </source>
</reference>
<reference key="3">
    <citation type="journal article" date="2004" name="Nature">
        <title>Genome sequence of the Brown Norway rat yields insights into mammalian evolution.</title>
        <authorList>
            <person name="Gibbs R.A."/>
            <person name="Weinstock G.M."/>
            <person name="Metzker M.L."/>
            <person name="Muzny D.M."/>
            <person name="Sodergren E.J."/>
            <person name="Scherer S."/>
            <person name="Scott G."/>
            <person name="Steffen D."/>
            <person name="Worley K.C."/>
            <person name="Burch P.E."/>
            <person name="Okwuonu G."/>
            <person name="Hines S."/>
            <person name="Lewis L."/>
            <person name="Deramo C."/>
            <person name="Delgado O."/>
            <person name="Dugan-Rocha S."/>
            <person name="Miner G."/>
            <person name="Morgan M."/>
            <person name="Hawes A."/>
            <person name="Gill R."/>
            <person name="Holt R.A."/>
            <person name="Adams M.D."/>
            <person name="Amanatides P.G."/>
            <person name="Baden-Tillson H."/>
            <person name="Barnstead M."/>
            <person name="Chin S."/>
            <person name="Evans C.A."/>
            <person name="Ferriera S."/>
            <person name="Fosler C."/>
            <person name="Glodek A."/>
            <person name="Gu Z."/>
            <person name="Jennings D."/>
            <person name="Kraft C.L."/>
            <person name="Nguyen T."/>
            <person name="Pfannkoch C.M."/>
            <person name="Sitter C."/>
            <person name="Sutton G.G."/>
            <person name="Venter J.C."/>
            <person name="Woodage T."/>
            <person name="Smith D."/>
            <person name="Lee H.-M."/>
            <person name="Gustafson E."/>
            <person name="Cahill P."/>
            <person name="Kana A."/>
            <person name="Doucette-Stamm L."/>
            <person name="Weinstock K."/>
            <person name="Fechtel K."/>
            <person name="Weiss R.B."/>
            <person name="Dunn D.M."/>
            <person name="Green E.D."/>
            <person name="Blakesley R.W."/>
            <person name="Bouffard G.G."/>
            <person name="De Jong P.J."/>
            <person name="Osoegawa K."/>
            <person name="Zhu B."/>
            <person name="Marra M."/>
            <person name="Schein J."/>
            <person name="Bosdet I."/>
            <person name="Fjell C."/>
            <person name="Jones S."/>
            <person name="Krzywinski M."/>
            <person name="Mathewson C."/>
            <person name="Siddiqui A."/>
            <person name="Wye N."/>
            <person name="McPherson J."/>
            <person name="Zhao S."/>
            <person name="Fraser C.M."/>
            <person name="Shetty J."/>
            <person name="Shatsman S."/>
            <person name="Geer K."/>
            <person name="Chen Y."/>
            <person name="Abramzon S."/>
            <person name="Nierman W.C."/>
            <person name="Havlak P.H."/>
            <person name="Chen R."/>
            <person name="Durbin K.J."/>
            <person name="Egan A."/>
            <person name="Ren Y."/>
            <person name="Song X.-Z."/>
            <person name="Li B."/>
            <person name="Liu Y."/>
            <person name="Qin X."/>
            <person name="Cawley S."/>
            <person name="Cooney A.J."/>
            <person name="D'Souza L.M."/>
            <person name="Martin K."/>
            <person name="Wu J.Q."/>
            <person name="Gonzalez-Garay M.L."/>
            <person name="Jackson A.R."/>
            <person name="Kalafus K.J."/>
            <person name="McLeod M.P."/>
            <person name="Milosavljevic A."/>
            <person name="Virk D."/>
            <person name="Volkov A."/>
            <person name="Wheeler D.A."/>
            <person name="Zhang Z."/>
            <person name="Bailey J.A."/>
            <person name="Eichler E.E."/>
            <person name="Tuzun E."/>
            <person name="Birney E."/>
            <person name="Mongin E."/>
            <person name="Ureta-Vidal A."/>
            <person name="Woodwark C."/>
            <person name="Zdobnov E."/>
            <person name="Bork P."/>
            <person name="Suyama M."/>
            <person name="Torrents D."/>
            <person name="Alexandersson M."/>
            <person name="Trask B.J."/>
            <person name="Young J.M."/>
            <person name="Huang H."/>
            <person name="Wang H."/>
            <person name="Xing H."/>
            <person name="Daniels S."/>
            <person name="Gietzen D."/>
            <person name="Schmidt J."/>
            <person name="Stevens K."/>
            <person name="Vitt U."/>
            <person name="Wingrove J."/>
            <person name="Camara F."/>
            <person name="Mar Alba M."/>
            <person name="Abril J.F."/>
            <person name="Guigo R."/>
            <person name="Smit A."/>
            <person name="Dubchak I."/>
            <person name="Rubin E.M."/>
            <person name="Couronne O."/>
            <person name="Poliakov A."/>
            <person name="Huebner N."/>
            <person name="Ganten D."/>
            <person name="Goesele C."/>
            <person name="Hummel O."/>
            <person name="Kreitler T."/>
            <person name="Lee Y.-A."/>
            <person name="Monti J."/>
            <person name="Schulz H."/>
            <person name="Zimdahl H."/>
            <person name="Himmelbauer H."/>
            <person name="Lehrach H."/>
            <person name="Jacob H.J."/>
            <person name="Bromberg S."/>
            <person name="Gullings-Handley J."/>
            <person name="Jensen-Seaman M.I."/>
            <person name="Kwitek A.E."/>
            <person name="Lazar J."/>
            <person name="Pasko D."/>
            <person name="Tonellato P.J."/>
            <person name="Twigger S."/>
            <person name="Ponting C.P."/>
            <person name="Duarte J.M."/>
            <person name="Rice S."/>
            <person name="Goodstadt L."/>
            <person name="Beatson S.A."/>
            <person name="Emes R.D."/>
            <person name="Winter E.E."/>
            <person name="Webber C."/>
            <person name="Brandt P."/>
            <person name="Nyakatura G."/>
            <person name="Adetobi M."/>
            <person name="Chiaromonte F."/>
            <person name="Elnitski L."/>
            <person name="Eswara P."/>
            <person name="Hardison R.C."/>
            <person name="Hou M."/>
            <person name="Kolbe D."/>
            <person name="Makova K."/>
            <person name="Miller W."/>
            <person name="Nekrutenko A."/>
            <person name="Riemer C."/>
            <person name="Schwartz S."/>
            <person name="Taylor J."/>
            <person name="Yang S."/>
            <person name="Zhang Y."/>
            <person name="Lindpaintner K."/>
            <person name="Andrews T.D."/>
            <person name="Caccamo M."/>
            <person name="Clamp M."/>
            <person name="Clarke L."/>
            <person name="Curwen V."/>
            <person name="Durbin R.M."/>
            <person name="Eyras E."/>
            <person name="Searle S.M."/>
            <person name="Cooper G.M."/>
            <person name="Batzoglou S."/>
            <person name="Brudno M."/>
            <person name="Sidow A."/>
            <person name="Stone E.A."/>
            <person name="Payseur B.A."/>
            <person name="Bourque G."/>
            <person name="Lopez-Otin C."/>
            <person name="Puente X.S."/>
            <person name="Chakrabarti K."/>
            <person name="Chatterji S."/>
            <person name="Dewey C."/>
            <person name="Pachter L."/>
            <person name="Bray N."/>
            <person name="Yap V.B."/>
            <person name="Caspi A."/>
            <person name="Tesler G."/>
            <person name="Pevzner P.A."/>
            <person name="Haussler D."/>
            <person name="Roskin K.M."/>
            <person name="Baertsch R."/>
            <person name="Clawson H."/>
            <person name="Furey T.S."/>
            <person name="Hinrichs A.S."/>
            <person name="Karolchik D."/>
            <person name="Kent W.J."/>
            <person name="Rosenbloom K.R."/>
            <person name="Trumbower H."/>
            <person name="Weirauch M."/>
            <person name="Cooper D.N."/>
            <person name="Stenson P.D."/>
            <person name="Ma B."/>
            <person name="Brent M."/>
            <person name="Arumugam M."/>
            <person name="Shteynberg D."/>
            <person name="Copley R.R."/>
            <person name="Taylor M.S."/>
            <person name="Riethman H."/>
            <person name="Mudunuri U."/>
            <person name="Peterson J."/>
            <person name="Guyer M."/>
            <person name="Felsenfeld A."/>
            <person name="Old S."/>
            <person name="Mockrin S."/>
            <person name="Collins F.S."/>
        </authorList>
    </citation>
    <scope>NUCLEOTIDE SEQUENCE [LARGE SCALE GENOMIC DNA]</scope>
    <source>
        <strain>Brown Norway</strain>
    </source>
</reference>
<gene>
    <name evidence="5" type="primary">Mt-nd4l</name>
    <name type="synonym">Mtnd4l</name>
    <name type="synonym">Nd4l</name>
</gene>
<sequence>MTSAFLNLTMAFTLSLLGTFMFRSHLMSTLLCLEGMMLSLFVMTSTSTLNSNSMISMTIPITILVFAACEAAVGLALLVKISNTYGTDYVQNLNLLQC</sequence>
<dbReference type="EC" id="7.1.1.2"/>
<dbReference type="EMBL" id="J01435">
    <property type="protein sequence ID" value="AAD15022.1"/>
    <property type="molecule type" value="Genomic_DNA"/>
</dbReference>
<dbReference type="EMBL" id="X14848">
    <property type="protein sequence ID" value="CAA32962.1"/>
    <property type="molecule type" value="Genomic_DNA"/>
</dbReference>
<dbReference type="EMBL" id="AY172581">
    <property type="protein sequence ID" value="AAN77602.1"/>
    <property type="molecule type" value="Genomic_DNA"/>
</dbReference>
<dbReference type="PIR" id="S04755">
    <property type="entry name" value="S04755"/>
</dbReference>
<dbReference type="RefSeq" id="AP_004900.1">
    <property type="nucleotide sequence ID" value="AC_000022.2"/>
</dbReference>
<dbReference type="RefSeq" id="YP_665637.1">
    <property type="nucleotide sequence ID" value="NC_001665.2"/>
</dbReference>
<dbReference type="SMR" id="P05507"/>
<dbReference type="FunCoup" id="P05507">
    <property type="interactions" value="59"/>
</dbReference>
<dbReference type="STRING" id="10116.ENSRNOP00000042064"/>
<dbReference type="PaxDb" id="10116-ENSRNOP00000042064"/>
<dbReference type="Ensembl" id="ENSRNOT00000044582.3">
    <property type="protein sequence ID" value="ENSRNOP00000042064.3"/>
    <property type="gene ID" value="ENSRNOG00000031053.3"/>
</dbReference>
<dbReference type="GeneID" id="26200"/>
<dbReference type="KEGG" id="rno:26200"/>
<dbReference type="AGR" id="RGD:620494"/>
<dbReference type="CTD" id="4539"/>
<dbReference type="RGD" id="620494">
    <property type="gene designation" value="Mt-nd4l"/>
</dbReference>
<dbReference type="eggNOG" id="KOG4669">
    <property type="taxonomic scope" value="Eukaryota"/>
</dbReference>
<dbReference type="GeneTree" id="ENSGT00390000004755"/>
<dbReference type="HOGENOM" id="CLU_182394_0_0_1"/>
<dbReference type="InParanoid" id="P05507"/>
<dbReference type="OMA" id="MYRSHLM"/>
<dbReference type="PRO" id="PR:P05507"/>
<dbReference type="Proteomes" id="UP000002494">
    <property type="component" value="Mitochondrion"/>
</dbReference>
<dbReference type="Bgee" id="ENSRNOG00000031053">
    <property type="expression patterns" value="Expressed in adult mammalian kidney and 18 other cell types or tissues"/>
</dbReference>
<dbReference type="ExpressionAtlas" id="P05507">
    <property type="expression patterns" value="baseline and differential"/>
</dbReference>
<dbReference type="GO" id="GO:0005743">
    <property type="term" value="C:mitochondrial inner membrane"/>
    <property type="evidence" value="ECO:0000250"/>
    <property type="project" value="UniProtKB"/>
</dbReference>
<dbReference type="GO" id="GO:0045271">
    <property type="term" value="C:respiratory chain complex I"/>
    <property type="evidence" value="ECO:0000250"/>
    <property type="project" value="UniProtKB"/>
</dbReference>
<dbReference type="GO" id="GO:0008137">
    <property type="term" value="F:NADH dehydrogenase (ubiquinone) activity"/>
    <property type="evidence" value="ECO:0000250"/>
    <property type="project" value="UniProtKB"/>
</dbReference>
<dbReference type="GO" id="GO:0042773">
    <property type="term" value="P:ATP synthesis coupled electron transport"/>
    <property type="evidence" value="ECO:0007669"/>
    <property type="project" value="InterPro"/>
</dbReference>
<dbReference type="FunFam" id="1.10.287.3510:FF:000002">
    <property type="entry name" value="NADH-ubiquinone oxidoreductase chain 4L"/>
    <property type="match status" value="1"/>
</dbReference>
<dbReference type="Gene3D" id="1.10.287.3510">
    <property type="match status" value="1"/>
</dbReference>
<dbReference type="InterPro" id="IPR001133">
    <property type="entry name" value="NADH_UbQ_OxRdtase_chain4L/K"/>
</dbReference>
<dbReference type="InterPro" id="IPR039428">
    <property type="entry name" value="NUOK/Mnh_C1-like"/>
</dbReference>
<dbReference type="PANTHER" id="PTHR11434:SF0">
    <property type="entry name" value="NADH-UBIQUINONE OXIDOREDUCTASE CHAIN 4L"/>
    <property type="match status" value="1"/>
</dbReference>
<dbReference type="PANTHER" id="PTHR11434">
    <property type="entry name" value="NADH-UBIQUINONE OXIDOREDUCTASE SUBUNIT ND4L"/>
    <property type="match status" value="1"/>
</dbReference>
<dbReference type="Pfam" id="PF00420">
    <property type="entry name" value="Oxidored_q2"/>
    <property type="match status" value="1"/>
</dbReference>
<accession>P05507</accession>
<proteinExistence type="inferred from homology"/>
<organism>
    <name type="scientific">Rattus norvegicus</name>
    <name type="common">Rat</name>
    <dbReference type="NCBI Taxonomy" id="10116"/>
    <lineage>
        <taxon>Eukaryota</taxon>
        <taxon>Metazoa</taxon>
        <taxon>Chordata</taxon>
        <taxon>Craniata</taxon>
        <taxon>Vertebrata</taxon>
        <taxon>Euteleostomi</taxon>
        <taxon>Mammalia</taxon>
        <taxon>Eutheria</taxon>
        <taxon>Euarchontoglires</taxon>
        <taxon>Glires</taxon>
        <taxon>Rodentia</taxon>
        <taxon>Myomorpha</taxon>
        <taxon>Muroidea</taxon>
        <taxon>Muridae</taxon>
        <taxon>Murinae</taxon>
        <taxon>Rattus</taxon>
    </lineage>
</organism>
<keyword id="KW-0249">Electron transport</keyword>
<keyword id="KW-0472">Membrane</keyword>
<keyword id="KW-0496">Mitochondrion</keyword>
<keyword id="KW-0999">Mitochondrion inner membrane</keyword>
<keyword id="KW-0520">NAD</keyword>
<keyword id="KW-1185">Reference proteome</keyword>
<keyword id="KW-0679">Respiratory chain</keyword>
<keyword id="KW-1278">Translocase</keyword>
<keyword id="KW-0812">Transmembrane</keyword>
<keyword id="KW-1133">Transmembrane helix</keyword>
<keyword id="KW-0813">Transport</keyword>
<keyword id="KW-0830">Ubiquinone</keyword>
<comment type="function">
    <text evidence="1">Core subunit of the mitochondrial membrane respiratory chain NADH dehydrogenase (Complex I) which catalyzes electron transfer from NADH through the respiratory chain, using ubiquinone as an electron acceptor. Part of the enzyme membrane arm which is embedded in the lipid bilayer and involved in proton translocation.</text>
</comment>
<comment type="catalytic activity">
    <reaction evidence="1">
        <text>a ubiquinone + NADH + 5 H(+)(in) = a ubiquinol + NAD(+) + 4 H(+)(out)</text>
        <dbReference type="Rhea" id="RHEA:29091"/>
        <dbReference type="Rhea" id="RHEA-COMP:9565"/>
        <dbReference type="Rhea" id="RHEA-COMP:9566"/>
        <dbReference type="ChEBI" id="CHEBI:15378"/>
        <dbReference type="ChEBI" id="CHEBI:16389"/>
        <dbReference type="ChEBI" id="CHEBI:17976"/>
        <dbReference type="ChEBI" id="CHEBI:57540"/>
        <dbReference type="ChEBI" id="CHEBI:57945"/>
        <dbReference type="EC" id="7.1.1.2"/>
    </reaction>
    <physiologicalReaction direction="left-to-right" evidence="1">
        <dbReference type="Rhea" id="RHEA:29092"/>
    </physiologicalReaction>
</comment>
<comment type="subunit">
    <text evidence="2">Core subunit of respiratory chain NADH dehydrogenase (Complex I) which is composed of 45 different subunits.</text>
</comment>
<comment type="subcellular location">
    <subcellularLocation>
        <location evidence="2">Mitochondrion inner membrane</location>
        <topology evidence="3">Multi-pass membrane protein</topology>
    </subcellularLocation>
</comment>
<comment type="similarity">
    <text evidence="4">Belongs to the complex I subunit 4L family.</text>
</comment>
<feature type="chain" id="PRO_0000118483" description="NADH-ubiquinone oxidoreductase chain 4L">
    <location>
        <begin position="1"/>
        <end position="98"/>
    </location>
</feature>
<feature type="transmembrane region" description="Helical" evidence="3">
    <location>
        <begin position="2"/>
        <end position="22"/>
    </location>
</feature>
<feature type="transmembrane region" description="Helical" evidence="3">
    <location>
        <begin position="26"/>
        <end position="46"/>
    </location>
</feature>
<feature type="transmembrane region" description="Helical" evidence="3">
    <location>
        <begin position="59"/>
        <end position="79"/>
    </location>
</feature>
<feature type="sequence conflict" description="In Ref. 1; AAD15022." evidence="4" ref="1">
    <original>A</original>
    <variation>V</variation>
    <location>
        <position position="71"/>
    </location>
</feature>
<feature type="sequence conflict" description="In Ref. 1; AAD15022." evidence="4" ref="1">
    <original>Y</original>
    <variation>H</variation>
    <location>
        <position position="85"/>
    </location>
</feature>
<geneLocation type="mitochondrion"/>